<dbReference type="EMBL" id="AF188935">
    <property type="protein sequence ID" value="AAF13627.1"/>
    <property type="status" value="ALT_INIT"/>
    <property type="molecule type" value="Genomic_DNA"/>
</dbReference>
<dbReference type="EMBL" id="AE011191">
    <property type="protein sequence ID" value="AAM26181.1"/>
    <property type="molecule type" value="Genomic_DNA"/>
</dbReference>
<dbReference type="EMBL" id="AE017335">
    <property type="protein sequence ID" value="AAT28951.2"/>
    <property type="molecule type" value="Genomic_DNA"/>
</dbReference>
<dbReference type="RefSeq" id="NP_053177.1">
    <property type="nucleotide sequence ID" value="NC_002146.1"/>
</dbReference>
<dbReference type="RefSeq" id="WP_001266996.1">
    <property type="nucleotide sequence ID" value="NZ_VTZL01000009.1"/>
</dbReference>
<dbReference type="SMR" id="Q6F055"/>
<dbReference type="GeneID" id="45025334"/>
<dbReference type="KEGG" id="banh:HYU01_29105"/>
<dbReference type="KEGG" id="bar:GBAA_pXO2_0021"/>
<dbReference type="HOGENOM" id="CLU_1114085_0_0_9"/>
<dbReference type="OMA" id="PFIDFAN"/>
<dbReference type="Proteomes" id="UP000000594">
    <property type="component" value="Plasmid pXO2"/>
</dbReference>
<dbReference type="GO" id="GO:0005886">
    <property type="term" value="C:plasma membrane"/>
    <property type="evidence" value="ECO:0007669"/>
    <property type="project" value="UniProtKB-SubCell"/>
</dbReference>
<proteinExistence type="predicted"/>
<name>Y6521_BACAN</name>
<accession>Q6F055</accession>
<accession>Q8KYG3</accession>
<accession>Q9RN10</accession>
<protein>
    <recommendedName>
        <fullName>Uncharacterized protein pXO2-22/BXB0021/GBAA_pXO2_0021</fullName>
    </recommendedName>
</protein>
<comment type="subcellular location">
    <subcellularLocation>
        <location evidence="2">Cell membrane</location>
        <topology evidence="2">Multi-pass membrane protein</topology>
    </subcellularLocation>
</comment>
<comment type="sequence caution" evidence="2">
    <conflict type="erroneous initiation">
        <sequence resource="EMBL-CDS" id="AAF13627"/>
    </conflict>
</comment>
<keyword id="KW-1003">Cell membrane</keyword>
<keyword id="KW-0472">Membrane</keyword>
<keyword id="KW-0614">Plasmid</keyword>
<keyword id="KW-1185">Reference proteome</keyword>
<keyword id="KW-0812">Transmembrane</keyword>
<keyword id="KW-1133">Transmembrane helix</keyword>
<sequence>MRVVTAKSIKKNRYNRMFAEEDLYSMLEEMGNTQQMINKFQKKRITQTILLSFFGLLLGLFFTSWCYLLALGLPFFFYRSKYTHVTKTYNAFKFERHLNFSKFTRLLIPYLKESGESTSLYQVFRKILNRMDNPVDKNSLAKLMSEMTDKPNDIQPFTDYAMRSSGSDMSINIMQTIYDFQQNSSDTNVINELGQMASAELQRAIDEIIAFKLRRFNFFPTKIVMSSFILVVGFAAAVLVHHLSSINLS</sequence>
<organism>
    <name type="scientific">Bacillus anthracis</name>
    <dbReference type="NCBI Taxonomy" id="1392"/>
    <lineage>
        <taxon>Bacteria</taxon>
        <taxon>Bacillati</taxon>
        <taxon>Bacillota</taxon>
        <taxon>Bacilli</taxon>
        <taxon>Bacillales</taxon>
        <taxon>Bacillaceae</taxon>
        <taxon>Bacillus</taxon>
        <taxon>Bacillus cereus group</taxon>
    </lineage>
</organism>
<geneLocation type="plasmid">
    <name>pXO2</name>
</geneLocation>
<reference key="1">
    <citation type="journal article" date="1999" name="J. Appl. Microbiol.">
        <title>Sequence, assembly and analysis of pXO1 and pXO2.</title>
        <authorList>
            <person name="Okinaka R.T."/>
            <person name="Cloud K."/>
            <person name="Hampton O."/>
            <person name="Hoffmaster A."/>
            <person name="Hill K.K."/>
            <person name="Keim P."/>
            <person name="Koehler T."/>
            <person name="Lamke G."/>
            <person name="Kumano S."/>
            <person name="Manter D."/>
            <person name="Martinez Y."/>
            <person name="Ricke D."/>
            <person name="Svensson R."/>
            <person name="Jackson P.J."/>
        </authorList>
    </citation>
    <scope>NUCLEOTIDE SEQUENCE [GENOMIC DNA]</scope>
    <source>
        <strain>Pasteur</strain>
    </source>
</reference>
<reference key="2">
    <citation type="journal article" date="2002" name="Science">
        <title>Comparative genome sequencing for discovery of novel polymorphisms in Bacillus anthracis.</title>
        <authorList>
            <person name="Read T.D."/>
            <person name="Salzberg S.L."/>
            <person name="Pop M."/>
            <person name="Shumway M.F."/>
            <person name="Umayam L."/>
            <person name="Jiang L."/>
            <person name="Holtzapple E."/>
            <person name="Busch J.D."/>
            <person name="Smith K.L."/>
            <person name="Schupp J.M."/>
            <person name="Solomon D."/>
            <person name="Keim P."/>
            <person name="Fraser C.M."/>
        </authorList>
    </citation>
    <scope>NUCLEOTIDE SEQUENCE [GENOMIC DNA]</scope>
    <source>
        <strain>Ames / isolate Florida / A2012</strain>
    </source>
</reference>
<reference key="3">
    <citation type="journal article" date="2009" name="J. Bacteriol.">
        <title>The complete genome sequence of Bacillus anthracis Ames 'Ancestor'.</title>
        <authorList>
            <person name="Ravel J."/>
            <person name="Jiang L."/>
            <person name="Stanley S.T."/>
            <person name="Wilson M.R."/>
            <person name="Decker R.S."/>
            <person name="Read T.D."/>
            <person name="Worsham P."/>
            <person name="Keim P.S."/>
            <person name="Salzberg S.L."/>
            <person name="Fraser-Liggett C.M."/>
            <person name="Rasko D.A."/>
        </authorList>
    </citation>
    <scope>NUCLEOTIDE SEQUENCE [LARGE SCALE GENOMIC DNA]</scope>
    <source>
        <strain>Ames ancestor</strain>
    </source>
</reference>
<evidence type="ECO:0000255" key="1"/>
<evidence type="ECO:0000305" key="2"/>
<feature type="chain" id="PRO_0000216840" description="Uncharacterized protein pXO2-22/BXB0021/GBAA_pXO2_0021">
    <location>
        <begin position="1"/>
        <end position="249"/>
    </location>
</feature>
<feature type="transmembrane region" description="Helical" evidence="1">
    <location>
        <begin position="49"/>
        <end position="69"/>
    </location>
</feature>
<feature type="transmembrane region" description="Helical" evidence="1">
    <location>
        <begin position="223"/>
        <end position="243"/>
    </location>
</feature>
<gene>
    <name type="ordered locus">pXO2-22</name>
    <name type="ordered locus">BXB0021</name>
    <name type="ordered locus">GBAA_pXO2_0021</name>
</gene>